<geneLocation type="chloroplast"/>
<keyword id="KW-0066">ATP synthesis</keyword>
<keyword id="KW-0139">CF(1)</keyword>
<keyword id="KW-0150">Chloroplast</keyword>
<keyword id="KW-0375">Hydrogen ion transport</keyword>
<keyword id="KW-0406">Ion transport</keyword>
<keyword id="KW-0472">Membrane</keyword>
<keyword id="KW-0934">Plastid</keyword>
<keyword id="KW-0793">Thylakoid</keyword>
<keyword id="KW-0813">Transport</keyword>
<feature type="chain" id="PRO_0000188276" description="ATP synthase epsilon chain, chloroplastic">
    <location>
        <begin position="1"/>
        <end position="133"/>
    </location>
</feature>
<comment type="function">
    <text evidence="1">Produces ATP from ADP in the presence of a proton gradient across the membrane.</text>
</comment>
<comment type="subunit">
    <text evidence="1">F-type ATPases have 2 components, CF(1) - the catalytic core - and CF(0) - the membrane proton channel. CF(1) has five subunits: alpha(3), beta(3), gamma(1), delta(1), epsilon(1). CF(0) has three main subunits: a, b and c.</text>
</comment>
<comment type="subcellular location">
    <subcellularLocation>
        <location evidence="1">Plastid</location>
        <location evidence="1">Chloroplast thylakoid membrane</location>
        <topology evidence="1">Peripheral membrane protein</topology>
    </subcellularLocation>
</comment>
<comment type="similarity">
    <text evidence="1">Belongs to the ATPase epsilon chain family.</text>
</comment>
<gene>
    <name evidence="1" type="primary">atpE</name>
</gene>
<evidence type="ECO:0000255" key="1">
    <source>
        <dbReference type="HAMAP-Rule" id="MF_00530"/>
    </source>
</evidence>
<dbReference type="EMBL" id="AF137379">
    <property type="protein sequence ID" value="AAD54783.1"/>
    <property type="molecule type" value="Genomic_DNA"/>
</dbReference>
<dbReference type="RefSeq" id="NP_050812.1">
    <property type="nucleotide sequence ID" value="NC_000927.1"/>
</dbReference>
<dbReference type="SMR" id="Q9TL33"/>
<dbReference type="GeneID" id="802003"/>
<dbReference type="GO" id="GO:0009535">
    <property type="term" value="C:chloroplast thylakoid membrane"/>
    <property type="evidence" value="ECO:0007669"/>
    <property type="project" value="UniProtKB-SubCell"/>
</dbReference>
<dbReference type="GO" id="GO:0045259">
    <property type="term" value="C:proton-transporting ATP synthase complex"/>
    <property type="evidence" value="ECO:0007669"/>
    <property type="project" value="UniProtKB-KW"/>
</dbReference>
<dbReference type="GO" id="GO:0005524">
    <property type="term" value="F:ATP binding"/>
    <property type="evidence" value="ECO:0007669"/>
    <property type="project" value="UniProtKB-UniRule"/>
</dbReference>
<dbReference type="GO" id="GO:0046933">
    <property type="term" value="F:proton-transporting ATP synthase activity, rotational mechanism"/>
    <property type="evidence" value="ECO:0007669"/>
    <property type="project" value="UniProtKB-UniRule"/>
</dbReference>
<dbReference type="CDD" id="cd12152">
    <property type="entry name" value="F1-ATPase_delta"/>
    <property type="match status" value="1"/>
</dbReference>
<dbReference type="Gene3D" id="6.10.140.480">
    <property type="match status" value="1"/>
</dbReference>
<dbReference type="Gene3D" id="2.60.15.10">
    <property type="entry name" value="F0F1 ATP synthase delta/epsilon subunit, N-terminal"/>
    <property type="match status" value="1"/>
</dbReference>
<dbReference type="HAMAP" id="MF_00530">
    <property type="entry name" value="ATP_synth_epsil_bac"/>
    <property type="match status" value="1"/>
</dbReference>
<dbReference type="InterPro" id="IPR001469">
    <property type="entry name" value="ATP_synth_F1_dsu/esu"/>
</dbReference>
<dbReference type="InterPro" id="IPR020546">
    <property type="entry name" value="ATP_synth_F1_dsu/esu_N"/>
</dbReference>
<dbReference type="InterPro" id="IPR020547">
    <property type="entry name" value="ATP_synth_F1_esu_C"/>
</dbReference>
<dbReference type="InterPro" id="IPR036771">
    <property type="entry name" value="ATPsynth_dsu/esu_N"/>
</dbReference>
<dbReference type="NCBIfam" id="TIGR01216">
    <property type="entry name" value="ATP_synt_epsi"/>
    <property type="match status" value="1"/>
</dbReference>
<dbReference type="PANTHER" id="PTHR13822">
    <property type="entry name" value="ATP SYNTHASE DELTA/EPSILON CHAIN"/>
    <property type="match status" value="1"/>
</dbReference>
<dbReference type="PANTHER" id="PTHR13822:SF10">
    <property type="entry name" value="ATP SYNTHASE EPSILON CHAIN, CHLOROPLASTIC"/>
    <property type="match status" value="1"/>
</dbReference>
<dbReference type="Pfam" id="PF00401">
    <property type="entry name" value="ATP-synt_DE"/>
    <property type="match status" value="1"/>
</dbReference>
<dbReference type="Pfam" id="PF02823">
    <property type="entry name" value="ATP-synt_DE_N"/>
    <property type="match status" value="1"/>
</dbReference>
<dbReference type="SUPFAM" id="SSF51344">
    <property type="entry name" value="Epsilon subunit of F1F0-ATP synthase N-terminal domain"/>
    <property type="match status" value="1"/>
</dbReference>
<name>ATPE_NEPOL</name>
<reference key="1">
    <citation type="journal article" date="1999" name="Proc. Natl. Acad. Sci. U.S.A.">
        <title>The complete chloroplast DNA sequence of the green alga Nephroselmis olivacea: insights into the architecture of ancestral chloroplast genomes.</title>
        <authorList>
            <person name="Turmel M."/>
            <person name="Otis C."/>
            <person name="Lemieux C."/>
        </authorList>
    </citation>
    <scope>NUCLEOTIDE SEQUENCE [LARGE SCALE GENOMIC DNA]</scope>
    <source>
        <strain>NIES-484 / S-N-5-8</strain>
    </source>
</reference>
<accession>Q9TL33</accession>
<organism>
    <name type="scientific">Nephroselmis olivacea</name>
    <name type="common">Green alga</name>
    <dbReference type="NCBI Taxonomy" id="31312"/>
    <lineage>
        <taxon>Eukaryota</taxon>
        <taxon>Viridiplantae</taxon>
        <taxon>Chlorophyta</taxon>
        <taxon>Nephroselmidophyceae</taxon>
        <taxon>Nephroselmidales</taxon>
        <taxon>Nephroselmidaceae</taxon>
        <taxon>Nephroselmis</taxon>
    </lineage>
</organism>
<sequence>MSLQVRILTPEQVFLNVSADEIILPTNTGQMGVLTNHTPLITAIDIGPMLVRSESTWQSMALLGGLALVKDNQVIILVNEAELGSDINAEEAETTFLAAKEALANSKTRKDQIENNLAFKRARVRYQVATLVK</sequence>
<protein>
    <recommendedName>
        <fullName evidence="1">ATP synthase epsilon chain, chloroplastic</fullName>
    </recommendedName>
    <alternativeName>
        <fullName evidence="1">ATP synthase F1 sector epsilon subunit</fullName>
    </alternativeName>
    <alternativeName>
        <fullName evidence="1">F-ATPase epsilon subunit</fullName>
    </alternativeName>
</protein>
<proteinExistence type="inferred from homology"/>